<comment type="function">
    <text evidence="1">ATP-dependent RNA helicase involved in mRNA turnover, and more specifically in mRNA decapping by activating the decapping enzyme DCP1. Is involved in G1/S DNA-damage checkpoint recovery, probably through the regulation of the translational status of a subset of mRNAs. May also have a role in translation and mRNA nuclear export (By similarity).</text>
</comment>
<comment type="catalytic activity">
    <reaction>
        <text>ATP + H2O = ADP + phosphate + H(+)</text>
        <dbReference type="Rhea" id="RHEA:13065"/>
        <dbReference type="ChEBI" id="CHEBI:15377"/>
        <dbReference type="ChEBI" id="CHEBI:15378"/>
        <dbReference type="ChEBI" id="CHEBI:30616"/>
        <dbReference type="ChEBI" id="CHEBI:43474"/>
        <dbReference type="ChEBI" id="CHEBI:456216"/>
        <dbReference type="EC" id="3.6.4.13"/>
    </reaction>
</comment>
<comment type="subunit">
    <text evidence="1">Associated with the CCR4-NOT complex and possibly other big complexes. Interacts with CDC39/NOT1 and POP2, components of the CCR4-NOT complex, with the mRNA decapping proteins DCP1, LSM1, PAT1, and with KEM1, the major 5'-3' exonuclease (By similarity).</text>
</comment>
<comment type="subcellular location">
    <subcellularLocation>
        <location evidence="1">Cytoplasm</location>
        <location evidence="1">P-body</location>
    </subcellularLocation>
    <text evidence="1">Is concentrated in several cytoplasmic foci called P bodies (or cytoplasmic processing bodies) which represent sites of mRNA decapping and 5' to 3' exonucleotidic decay.</text>
</comment>
<comment type="domain">
    <text>The Q motif is unique to and characteristic of the DEAD box family of RNA helicases and controls ATP binding and hydrolysis.</text>
</comment>
<comment type="similarity">
    <text evidence="5">Belongs to the DEAD box helicase family. DDX6/DHH1 subfamily.</text>
</comment>
<accession>A6ZXG9</accession>
<keyword id="KW-0067">ATP-binding</keyword>
<keyword id="KW-0963">Cytoplasm</keyword>
<keyword id="KW-0347">Helicase</keyword>
<keyword id="KW-0378">Hydrolase</keyword>
<keyword id="KW-0507">mRNA processing</keyword>
<keyword id="KW-0509">mRNA transport</keyword>
<keyword id="KW-0547">Nucleotide-binding</keyword>
<keyword id="KW-0694">RNA-binding</keyword>
<keyword id="KW-0810">Translation regulation</keyword>
<keyword id="KW-0813">Transport</keyword>
<sequence length="506" mass="57544">MGSINNNFNTNNNSNTDLDRDWKTALNIPKKDTRPQTDDVLNTKGNTFEDFYLKRELLMGIFEAGFEKPSPIQEEAIPVAITGRDILARAKNGTGKTAAFVIPTLEKVKPKLNKIQALIMVPTRELALQTSQVVRTLGKHCGISCMVTTGGTNLRDDILRLNETVHILVGTPGRVLDLASRKVADLSDCSLFIMDEADKMLSRDFKTIIEQILSFLPPTHQSLLFSATFPLTVKEFMVKHLHKPYEINLMEELTLKGITQYYAFVEERQKLHCLNTLFSKLQINQAIIFCNSTNRVELLAKKITDLGYSCYYSHARMKQQERNKVFHEFRQGKVRTLVCSDLLTRGIDIQAVNVVINFDFPKTAETYLHRIGRSGRFGHLGLAINLINWNDRFNLYKIEQELGTEIAAIPATIDKSLYVAENDETVPVPFPIEQQSYHQQAIPQQQLPSQQQFAIPPQQHHPQFMVPPSHQQQQAYPPPQMPSQQGYPPQQEHFMAMPPGQSQPQY</sequence>
<name>DHH1_YEAS7</name>
<gene>
    <name type="primary">DHH1</name>
    <name type="ORF">SCY_0757</name>
</gene>
<proteinExistence type="inferred from homology"/>
<dbReference type="EC" id="3.6.4.13"/>
<dbReference type="EMBL" id="AAFW02000145">
    <property type="protein sequence ID" value="EDN60199.1"/>
    <property type="molecule type" value="Genomic_DNA"/>
</dbReference>
<dbReference type="SMR" id="A6ZXG9"/>
<dbReference type="IntAct" id="A6ZXG9">
    <property type="interactions" value="2"/>
</dbReference>
<dbReference type="MINT" id="A6ZXG9"/>
<dbReference type="HOGENOM" id="CLU_003041_30_0_1"/>
<dbReference type="Proteomes" id="UP000007060">
    <property type="component" value="Unassembled WGS sequence"/>
</dbReference>
<dbReference type="GO" id="GO:0000932">
    <property type="term" value="C:P-body"/>
    <property type="evidence" value="ECO:0007669"/>
    <property type="project" value="UniProtKB-SubCell"/>
</dbReference>
<dbReference type="GO" id="GO:0005524">
    <property type="term" value="F:ATP binding"/>
    <property type="evidence" value="ECO:0007669"/>
    <property type="project" value="UniProtKB-KW"/>
</dbReference>
<dbReference type="GO" id="GO:0016887">
    <property type="term" value="F:ATP hydrolysis activity"/>
    <property type="evidence" value="ECO:0007669"/>
    <property type="project" value="RHEA"/>
</dbReference>
<dbReference type="GO" id="GO:0003723">
    <property type="term" value="F:RNA binding"/>
    <property type="evidence" value="ECO:0007669"/>
    <property type="project" value="UniProtKB-KW"/>
</dbReference>
<dbReference type="GO" id="GO:0003724">
    <property type="term" value="F:RNA helicase activity"/>
    <property type="evidence" value="ECO:0007669"/>
    <property type="project" value="UniProtKB-EC"/>
</dbReference>
<dbReference type="GO" id="GO:0006397">
    <property type="term" value="P:mRNA processing"/>
    <property type="evidence" value="ECO:0007669"/>
    <property type="project" value="UniProtKB-KW"/>
</dbReference>
<dbReference type="GO" id="GO:0051028">
    <property type="term" value="P:mRNA transport"/>
    <property type="evidence" value="ECO:0007669"/>
    <property type="project" value="UniProtKB-KW"/>
</dbReference>
<dbReference type="GO" id="GO:0006417">
    <property type="term" value="P:regulation of translation"/>
    <property type="evidence" value="ECO:0007669"/>
    <property type="project" value="UniProtKB-KW"/>
</dbReference>
<dbReference type="CDD" id="cd17940">
    <property type="entry name" value="DEADc_DDX6"/>
    <property type="match status" value="1"/>
</dbReference>
<dbReference type="CDD" id="cd18787">
    <property type="entry name" value="SF2_C_DEAD"/>
    <property type="match status" value="1"/>
</dbReference>
<dbReference type="FunFam" id="3.40.50.300:FF:000114">
    <property type="entry name" value="ATP-dependent RNA helicase DDX6"/>
    <property type="match status" value="1"/>
</dbReference>
<dbReference type="FunFam" id="3.40.50.300:FF:000364">
    <property type="entry name" value="ATP-dependent RNA helicase DDX6"/>
    <property type="match status" value="1"/>
</dbReference>
<dbReference type="Gene3D" id="3.40.50.300">
    <property type="entry name" value="P-loop containing nucleotide triphosphate hydrolases"/>
    <property type="match status" value="2"/>
</dbReference>
<dbReference type="InterPro" id="IPR011545">
    <property type="entry name" value="DEAD/DEAH_box_helicase_dom"/>
</dbReference>
<dbReference type="InterPro" id="IPR014001">
    <property type="entry name" value="Helicase_ATP-bd"/>
</dbReference>
<dbReference type="InterPro" id="IPR001650">
    <property type="entry name" value="Helicase_C-like"/>
</dbReference>
<dbReference type="InterPro" id="IPR027417">
    <property type="entry name" value="P-loop_NTPase"/>
</dbReference>
<dbReference type="InterPro" id="IPR000629">
    <property type="entry name" value="RNA-helicase_DEAD-box_CS"/>
</dbReference>
<dbReference type="InterPro" id="IPR014014">
    <property type="entry name" value="RNA_helicase_DEAD_Q_motif"/>
</dbReference>
<dbReference type="PANTHER" id="PTHR47960">
    <property type="entry name" value="DEAD-BOX ATP-DEPENDENT RNA HELICASE 50"/>
    <property type="match status" value="1"/>
</dbReference>
<dbReference type="Pfam" id="PF00270">
    <property type="entry name" value="DEAD"/>
    <property type="match status" value="1"/>
</dbReference>
<dbReference type="Pfam" id="PF00271">
    <property type="entry name" value="Helicase_C"/>
    <property type="match status" value="1"/>
</dbReference>
<dbReference type="SMART" id="SM00487">
    <property type="entry name" value="DEXDc"/>
    <property type="match status" value="1"/>
</dbReference>
<dbReference type="SMART" id="SM00490">
    <property type="entry name" value="HELICc"/>
    <property type="match status" value="1"/>
</dbReference>
<dbReference type="SUPFAM" id="SSF52540">
    <property type="entry name" value="P-loop containing nucleoside triphosphate hydrolases"/>
    <property type="match status" value="1"/>
</dbReference>
<dbReference type="PROSITE" id="PS00039">
    <property type="entry name" value="DEAD_ATP_HELICASE"/>
    <property type="match status" value="1"/>
</dbReference>
<dbReference type="PROSITE" id="PS51192">
    <property type="entry name" value="HELICASE_ATP_BIND_1"/>
    <property type="match status" value="1"/>
</dbReference>
<dbReference type="PROSITE" id="PS51194">
    <property type="entry name" value="HELICASE_CTER"/>
    <property type="match status" value="1"/>
</dbReference>
<dbReference type="PROSITE" id="PS51195">
    <property type="entry name" value="Q_MOTIF"/>
    <property type="match status" value="1"/>
</dbReference>
<feature type="chain" id="PRO_0000310198" description="ATP-dependent RNA helicase DHH1">
    <location>
        <begin position="1"/>
        <end position="506"/>
    </location>
</feature>
<feature type="domain" description="Helicase ATP-binding" evidence="2">
    <location>
        <begin position="77"/>
        <end position="247"/>
    </location>
</feature>
<feature type="domain" description="Helicase C-terminal" evidence="3">
    <location>
        <begin position="257"/>
        <end position="417"/>
    </location>
</feature>
<feature type="region of interest" description="Disordered" evidence="4">
    <location>
        <begin position="1"/>
        <end position="20"/>
    </location>
</feature>
<feature type="region of interest" description="Disordered" evidence="4">
    <location>
        <begin position="459"/>
        <end position="506"/>
    </location>
</feature>
<feature type="short sequence motif" description="Q motif">
    <location>
        <begin position="46"/>
        <end position="74"/>
    </location>
</feature>
<feature type="short sequence motif" description="DEAD box">
    <location>
        <begin position="195"/>
        <end position="198"/>
    </location>
</feature>
<feature type="compositionally biased region" description="Low complexity" evidence="4">
    <location>
        <begin position="1"/>
        <end position="16"/>
    </location>
</feature>
<feature type="binding site" evidence="2">
    <location>
        <begin position="90"/>
        <end position="97"/>
    </location>
    <ligand>
        <name>ATP</name>
        <dbReference type="ChEBI" id="CHEBI:30616"/>
    </ligand>
</feature>
<organism>
    <name type="scientific">Saccharomyces cerevisiae (strain YJM789)</name>
    <name type="common">Baker's yeast</name>
    <dbReference type="NCBI Taxonomy" id="307796"/>
    <lineage>
        <taxon>Eukaryota</taxon>
        <taxon>Fungi</taxon>
        <taxon>Dikarya</taxon>
        <taxon>Ascomycota</taxon>
        <taxon>Saccharomycotina</taxon>
        <taxon>Saccharomycetes</taxon>
        <taxon>Saccharomycetales</taxon>
        <taxon>Saccharomycetaceae</taxon>
        <taxon>Saccharomyces</taxon>
    </lineage>
</organism>
<protein>
    <recommendedName>
        <fullName>ATP-dependent RNA helicase DHH1</fullName>
        <ecNumber>3.6.4.13</ecNumber>
    </recommendedName>
    <alternativeName>
        <fullName>DExD/H-box helicase 1</fullName>
    </alternativeName>
</protein>
<evidence type="ECO:0000250" key="1"/>
<evidence type="ECO:0000255" key="2">
    <source>
        <dbReference type="PROSITE-ProRule" id="PRU00541"/>
    </source>
</evidence>
<evidence type="ECO:0000255" key="3">
    <source>
        <dbReference type="PROSITE-ProRule" id="PRU00542"/>
    </source>
</evidence>
<evidence type="ECO:0000256" key="4">
    <source>
        <dbReference type="SAM" id="MobiDB-lite"/>
    </source>
</evidence>
<evidence type="ECO:0000305" key="5"/>
<reference key="1">
    <citation type="journal article" date="2007" name="Proc. Natl. Acad. Sci. U.S.A.">
        <title>Genome sequencing and comparative analysis of Saccharomyces cerevisiae strain YJM789.</title>
        <authorList>
            <person name="Wei W."/>
            <person name="McCusker J.H."/>
            <person name="Hyman R.W."/>
            <person name="Jones T."/>
            <person name="Ning Y."/>
            <person name="Cao Z."/>
            <person name="Gu Z."/>
            <person name="Bruno D."/>
            <person name="Miranda M."/>
            <person name="Nguyen M."/>
            <person name="Wilhelmy J."/>
            <person name="Komp C."/>
            <person name="Tamse R."/>
            <person name="Wang X."/>
            <person name="Jia P."/>
            <person name="Luedi P."/>
            <person name="Oefner P.J."/>
            <person name="David L."/>
            <person name="Dietrich F.S."/>
            <person name="Li Y."/>
            <person name="Davis R.W."/>
            <person name="Steinmetz L.M."/>
        </authorList>
    </citation>
    <scope>NUCLEOTIDE SEQUENCE [LARGE SCALE GENOMIC DNA]</scope>
    <source>
        <strain>YJM789</strain>
    </source>
</reference>